<reference key="1">
    <citation type="journal article" date="2005" name="Nature">
        <title>The genome of the social amoeba Dictyostelium discoideum.</title>
        <authorList>
            <person name="Eichinger L."/>
            <person name="Pachebat J.A."/>
            <person name="Gloeckner G."/>
            <person name="Rajandream M.A."/>
            <person name="Sucgang R."/>
            <person name="Berriman M."/>
            <person name="Song J."/>
            <person name="Olsen R."/>
            <person name="Szafranski K."/>
            <person name="Xu Q."/>
            <person name="Tunggal B."/>
            <person name="Kummerfeld S."/>
            <person name="Madera M."/>
            <person name="Konfortov B.A."/>
            <person name="Rivero F."/>
            <person name="Bankier A.T."/>
            <person name="Lehmann R."/>
            <person name="Hamlin N."/>
            <person name="Davies R."/>
            <person name="Gaudet P."/>
            <person name="Fey P."/>
            <person name="Pilcher K."/>
            <person name="Chen G."/>
            <person name="Saunders D."/>
            <person name="Sodergren E.J."/>
            <person name="Davis P."/>
            <person name="Kerhornou A."/>
            <person name="Nie X."/>
            <person name="Hall N."/>
            <person name="Anjard C."/>
            <person name="Hemphill L."/>
            <person name="Bason N."/>
            <person name="Farbrother P."/>
            <person name="Desany B."/>
            <person name="Just E."/>
            <person name="Morio T."/>
            <person name="Rost R."/>
            <person name="Churcher C.M."/>
            <person name="Cooper J."/>
            <person name="Haydock S."/>
            <person name="van Driessche N."/>
            <person name="Cronin A."/>
            <person name="Goodhead I."/>
            <person name="Muzny D.M."/>
            <person name="Mourier T."/>
            <person name="Pain A."/>
            <person name="Lu M."/>
            <person name="Harper D."/>
            <person name="Lindsay R."/>
            <person name="Hauser H."/>
            <person name="James K.D."/>
            <person name="Quiles M."/>
            <person name="Madan Babu M."/>
            <person name="Saito T."/>
            <person name="Buchrieser C."/>
            <person name="Wardroper A."/>
            <person name="Felder M."/>
            <person name="Thangavelu M."/>
            <person name="Johnson D."/>
            <person name="Knights A."/>
            <person name="Loulseged H."/>
            <person name="Mungall K.L."/>
            <person name="Oliver K."/>
            <person name="Price C."/>
            <person name="Quail M.A."/>
            <person name="Urushihara H."/>
            <person name="Hernandez J."/>
            <person name="Rabbinowitsch E."/>
            <person name="Steffen D."/>
            <person name="Sanders M."/>
            <person name="Ma J."/>
            <person name="Kohara Y."/>
            <person name="Sharp S."/>
            <person name="Simmonds M.N."/>
            <person name="Spiegler S."/>
            <person name="Tivey A."/>
            <person name="Sugano S."/>
            <person name="White B."/>
            <person name="Walker D."/>
            <person name="Woodward J.R."/>
            <person name="Winckler T."/>
            <person name="Tanaka Y."/>
            <person name="Shaulsky G."/>
            <person name="Schleicher M."/>
            <person name="Weinstock G.M."/>
            <person name="Rosenthal A."/>
            <person name="Cox E.C."/>
            <person name="Chisholm R.L."/>
            <person name="Gibbs R.A."/>
            <person name="Loomis W.F."/>
            <person name="Platzer M."/>
            <person name="Kay R.R."/>
            <person name="Williams J.G."/>
            <person name="Dear P.H."/>
            <person name="Noegel A.A."/>
            <person name="Barrell B.G."/>
            <person name="Kuspa A."/>
        </authorList>
    </citation>
    <scope>NUCLEOTIDE SEQUENCE [LARGE SCALE GENOMIC DNA]</scope>
    <source>
        <strain>AX4</strain>
    </source>
</reference>
<protein>
    <recommendedName>
        <fullName evidence="4">Putative ribosome biogenesis ATPase nvl</fullName>
    </recommendedName>
    <alternativeName>
        <fullName>Nuclear valosin-containing protein-like</fullName>
    </alternativeName>
</protein>
<name>NVL_DICDI</name>
<accession>Q54SY2</accession>
<feature type="chain" id="PRO_0000365736" description="Putative ribosome biogenesis ATPase nvl">
    <location>
        <begin position="1"/>
        <end position="867"/>
    </location>
</feature>
<feature type="region of interest" description="Disordered" evidence="3">
    <location>
        <begin position="70"/>
        <end position="203"/>
    </location>
</feature>
<feature type="region of interest" description="Disordered" evidence="3">
    <location>
        <begin position="351"/>
        <end position="370"/>
    </location>
</feature>
<feature type="region of interest" description="Disordered" evidence="3">
    <location>
        <begin position="834"/>
        <end position="855"/>
    </location>
</feature>
<feature type="compositionally biased region" description="Polar residues" evidence="3">
    <location>
        <begin position="110"/>
        <end position="122"/>
    </location>
</feature>
<feature type="compositionally biased region" description="Low complexity" evidence="3">
    <location>
        <begin position="123"/>
        <end position="132"/>
    </location>
</feature>
<feature type="compositionally biased region" description="Low complexity" evidence="3">
    <location>
        <begin position="141"/>
        <end position="172"/>
    </location>
</feature>
<feature type="compositionally biased region" description="Low complexity" evidence="3">
    <location>
        <begin position="180"/>
        <end position="203"/>
    </location>
</feature>
<feature type="compositionally biased region" description="Basic and acidic residues" evidence="3">
    <location>
        <begin position="834"/>
        <end position="843"/>
    </location>
</feature>
<feature type="compositionally biased region" description="Low complexity" evidence="3">
    <location>
        <begin position="844"/>
        <end position="855"/>
    </location>
</feature>
<feature type="binding site" evidence="2">
    <location>
        <begin position="257"/>
        <end position="264"/>
    </location>
    <ligand>
        <name>ATP</name>
        <dbReference type="ChEBI" id="CHEBI:30616"/>
    </ligand>
</feature>
<feature type="binding site" evidence="2">
    <location>
        <begin position="607"/>
        <end position="614"/>
    </location>
    <ligand>
        <name>ATP</name>
        <dbReference type="ChEBI" id="CHEBI:30616"/>
    </ligand>
</feature>
<proteinExistence type="inferred from homology"/>
<keyword id="KW-0067">ATP-binding</keyword>
<keyword id="KW-0547">Nucleotide-binding</keyword>
<keyword id="KW-0539">Nucleus</keyword>
<keyword id="KW-1185">Reference proteome</keyword>
<keyword id="KW-0677">Repeat</keyword>
<keyword id="KW-0690">Ribosome biogenesis</keyword>
<gene>
    <name type="primary">nvl</name>
    <name type="ORF">DDB_G0282181</name>
</gene>
<comment type="function">
    <text evidence="1">Involved in ribosome biogenesis.</text>
</comment>
<comment type="subcellular location">
    <subcellularLocation>
        <location evidence="1">Nucleus</location>
        <location evidence="1">Nucleolus</location>
    </subcellularLocation>
    <subcellularLocation>
        <location evidence="1">Nucleus</location>
        <location evidence="1">Nucleoplasm</location>
    </subcellularLocation>
</comment>
<comment type="similarity">
    <text evidence="4">Belongs to the AAA ATPase family.</text>
</comment>
<dbReference type="EMBL" id="AAFI02000045">
    <property type="protein sequence ID" value="EAL66370.1"/>
    <property type="molecule type" value="Genomic_DNA"/>
</dbReference>
<dbReference type="RefSeq" id="XP_640327.1">
    <property type="nucleotide sequence ID" value="XM_635235.1"/>
</dbReference>
<dbReference type="SMR" id="Q54SY2"/>
<dbReference type="FunCoup" id="Q54SY2">
    <property type="interactions" value="988"/>
</dbReference>
<dbReference type="STRING" id="44689.Q54SY2"/>
<dbReference type="PaxDb" id="44689-DDB0237516"/>
<dbReference type="EnsemblProtists" id="EAL66370">
    <property type="protein sequence ID" value="EAL66370"/>
    <property type="gene ID" value="DDB_G0282181"/>
</dbReference>
<dbReference type="GeneID" id="8623428"/>
<dbReference type="KEGG" id="ddi:DDB_G0282181"/>
<dbReference type="dictyBase" id="DDB_G0282181">
    <property type="gene designation" value="nvl"/>
</dbReference>
<dbReference type="VEuPathDB" id="AmoebaDB:DDB_G0282181"/>
<dbReference type="eggNOG" id="KOG0733">
    <property type="taxonomic scope" value="Eukaryota"/>
</dbReference>
<dbReference type="HOGENOM" id="CLU_000688_8_3_1"/>
<dbReference type="InParanoid" id="Q54SY2"/>
<dbReference type="OMA" id="MESNSAM"/>
<dbReference type="PhylomeDB" id="Q54SY2"/>
<dbReference type="PRO" id="PR:Q54SY2"/>
<dbReference type="Proteomes" id="UP000002195">
    <property type="component" value="Chromosome 3"/>
</dbReference>
<dbReference type="GO" id="GO:0005730">
    <property type="term" value="C:nucleolus"/>
    <property type="evidence" value="ECO:0000250"/>
    <property type="project" value="dictyBase"/>
</dbReference>
<dbReference type="GO" id="GO:0005654">
    <property type="term" value="C:nucleoplasm"/>
    <property type="evidence" value="ECO:0007669"/>
    <property type="project" value="UniProtKB-SubCell"/>
</dbReference>
<dbReference type="GO" id="GO:0005634">
    <property type="term" value="C:nucleus"/>
    <property type="evidence" value="ECO:0000318"/>
    <property type="project" value="GO_Central"/>
</dbReference>
<dbReference type="GO" id="GO:0005524">
    <property type="term" value="F:ATP binding"/>
    <property type="evidence" value="ECO:0007669"/>
    <property type="project" value="UniProtKB-KW"/>
</dbReference>
<dbReference type="GO" id="GO:0016887">
    <property type="term" value="F:ATP hydrolysis activity"/>
    <property type="evidence" value="ECO:0000318"/>
    <property type="project" value="GO_Central"/>
</dbReference>
<dbReference type="GO" id="GO:1990275">
    <property type="term" value="F:preribosome binding"/>
    <property type="evidence" value="ECO:0000318"/>
    <property type="project" value="GO_Central"/>
</dbReference>
<dbReference type="GO" id="GO:0032092">
    <property type="term" value="P:positive regulation of protein binding"/>
    <property type="evidence" value="ECO:0000250"/>
    <property type="project" value="UniProtKB"/>
</dbReference>
<dbReference type="GO" id="GO:1904749">
    <property type="term" value="P:regulation of protein localization to nucleolus"/>
    <property type="evidence" value="ECO:0000250"/>
    <property type="project" value="UniProtKB"/>
</dbReference>
<dbReference type="GO" id="GO:0042273">
    <property type="term" value="P:ribosomal large subunit biogenesis"/>
    <property type="evidence" value="ECO:0000250"/>
    <property type="project" value="UniProtKB"/>
</dbReference>
<dbReference type="GO" id="GO:0000055">
    <property type="term" value="P:ribosomal large subunit export from nucleus"/>
    <property type="evidence" value="ECO:0000250"/>
    <property type="project" value="dictyBase"/>
</dbReference>
<dbReference type="GO" id="GO:0042254">
    <property type="term" value="P:ribosome biogenesis"/>
    <property type="evidence" value="ECO:0000318"/>
    <property type="project" value="GO_Central"/>
</dbReference>
<dbReference type="GO" id="GO:0006364">
    <property type="term" value="P:rRNA processing"/>
    <property type="evidence" value="ECO:0000250"/>
    <property type="project" value="UniProtKB"/>
</dbReference>
<dbReference type="CDD" id="cd19518">
    <property type="entry name" value="RecA-like_NVL_r1-like"/>
    <property type="match status" value="1"/>
</dbReference>
<dbReference type="CDD" id="cd19530">
    <property type="entry name" value="RecA-like_NVL_r2-like"/>
    <property type="match status" value="1"/>
</dbReference>
<dbReference type="FunFam" id="1.10.8.60:FF:000185">
    <property type="entry name" value="CBN-MAC-1 protein"/>
    <property type="match status" value="1"/>
</dbReference>
<dbReference type="FunFam" id="3.40.50.300:FF:000149">
    <property type="entry name" value="Nuclear valosin-containing protein-like"/>
    <property type="match status" value="1"/>
</dbReference>
<dbReference type="Gene3D" id="1.10.10.2010">
    <property type="match status" value="1"/>
</dbReference>
<dbReference type="Gene3D" id="1.10.8.60">
    <property type="match status" value="2"/>
</dbReference>
<dbReference type="Gene3D" id="3.40.50.300">
    <property type="entry name" value="P-loop containing nucleotide triphosphate hydrolases"/>
    <property type="match status" value="2"/>
</dbReference>
<dbReference type="InterPro" id="IPR003593">
    <property type="entry name" value="AAA+_ATPase"/>
</dbReference>
<dbReference type="InterPro" id="IPR050168">
    <property type="entry name" value="AAA_ATPase_domain"/>
</dbReference>
<dbReference type="InterPro" id="IPR041569">
    <property type="entry name" value="AAA_lid_3"/>
</dbReference>
<dbReference type="InterPro" id="IPR003959">
    <property type="entry name" value="ATPase_AAA_core"/>
</dbReference>
<dbReference type="InterPro" id="IPR038100">
    <property type="entry name" value="NLV2_N_sf"/>
</dbReference>
<dbReference type="InterPro" id="IPR031996">
    <property type="entry name" value="NVL2_nucleolin-bd"/>
</dbReference>
<dbReference type="InterPro" id="IPR027417">
    <property type="entry name" value="P-loop_NTPase"/>
</dbReference>
<dbReference type="PANTHER" id="PTHR23077">
    <property type="entry name" value="AAA-FAMILY ATPASE"/>
    <property type="match status" value="1"/>
</dbReference>
<dbReference type="PANTHER" id="PTHR23077:SF171">
    <property type="entry name" value="NUCLEAR VALOSIN-CONTAINING PROTEIN-LIKE"/>
    <property type="match status" value="1"/>
</dbReference>
<dbReference type="Pfam" id="PF00004">
    <property type="entry name" value="AAA"/>
    <property type="match status" value="2"/>
</dbReference>
<dbReference type="Pfam" id="PF17862">
    <property type="entry name" value="AAA_lid_3"/>
    <property type="match status" value="2"/>
</dbReference>
<dbReference type="Pfam" id="PF16725">
    <property type="entry name" value="Nucleolin_bd"/>
    <property type="match status" value="1"/>
</dbReference>
<dbReference type="SMART" id="SM00382">
    <property type="entry name" value="AAA"/>
    <property type="match status" value="2"/>
</dbReference>
<dbReference type="SUPFAM" id="SSF52540">
    <property type="entry name" value="P-loop containing nucleoside triphosphate hydrolases"/>
    <property type="match status" value="2"/>
</dbReference>
<sequence length="867" mass="95524">MVNKKYTSGQNENEKLMDRIEKLDLSESNILNNDFITNELRKVYPEYNRKPLKGFKQLVEKAMNQIIKNLSSCESSENEDGDNKMEESDGDDVEIISPPLPPPSSNILNEQLTSQYKQNIKNTPPTTTTTTPAKRNRDENIPSNVNSNNNNNNNNNAINSNTTTNNVNTPNSKPKKKLKNSSNGNNVFQFSNNNNNNGNNKDNNLSNGLIPTINFSNLGGVESCLRDIREHIEYPICHPEIYSHLGVEPPRGILLHGPSGCGKTLLAKAIAGELKVPLFAISATEITSGVSGESEARVRTLFSNAIAQAPCIIFIDEIDAIAPKRESASKDMERRIVSQLLTCMDSLNYLSSNNSTNEPNEQTEQQQQQQQDIIEVDSQATTTTTASNNNNKQQKNDFKKGHVIVIGATNRPESLDTALRIGGRFDKEICLGIPDQTARCKILKVITSKMRLENNFDYEEIATLTPGYVGADINLLVKEAATNSVNRIFTSNLNGASSSSSSSSSSTTNINNIGLSTELLISKEPLEPEKLNSLYIEMIDFKKALKKVVPAAKREGFATIPNVTWDDVGALSGVREELTNSILRPIRYPKKYKNMGIDSPAGVLMYGPPGCGKTLLAKAIASECQANFISVKGPELLNKYVGESERAVRQVFQRAAASSPCVIFFDEFDALAPKRGGGDGGGNQATERVVNQLLTEMDGLEKRSEVFIIAATNRPDIIDAAMCRPGRLDKMVYVPLPSPEERCEILKTLTHKIPIHQDVDLIKVGTDLRCHSFSGADLSLLVKEAANHAISRGFDNNSTEPDTVTMEDFIFALSKIKPSVSRKDELMYDKLNNDINKSRDKKPNNSNNIPITNNIPITNNNNNMIIN</sequence>
<organism>
    <name type="scientific">Dictyostelium discoideum</name>
    <name type="common">Social amoeba</name>
    <dbReference type="NCBI Taxonomy" id="44689"/>
    <lineage>
        <taxon>Eukaryota</taxon>
        <taxon>Amoebozoa</taxon>
        <taxon>Evosea</taxon>
        <taxon>Eumycetozoa</taxon>
        <taxon>Dictyostelia</taxon>
        <taxon>Dictyosteliales</taxon>
        <taxon>Dictyosteliaceae</taxon>
        <taxon>Dictyostelium</taxon>
    </lineage>
</organism>
<evidence type="ECO:0000250" key="1">
    <source>
        <dbReference type="UniProtKB" id="O15381"/>
    </source>
</evidence>
<evidence type="ECO:0000255" key="2"/>
<evidence type="ECO:0000256" key="3">
    <source>
        <dbReference type="SAM" id="MobiDB-lite"/>
    </source>
</evidence>
<evidence type="ECO:0000305" key="4"/>